<keyword id="KW-0597">Phosphoprotein</keyword>
<keyword id="KW-1185">Reference proteome</keyword>
<keyword id="KW-0687">Ribonucleoprotein</keyword>
<keyword id="KW-0689">Ribosomal protein</keyword>
<reference key="1">
    <citation type="submission" date="2004-11" db="EMBL/GenBank/DDBJ databases">
        <authorList>
            <consortium name="The German cDNA consortium"/>
        </authorList>
    </citation>
    <scope>NUCLEOTIDE SEQUENCE [LARGE SCALE MRNA]</scope>
    <source>
        <tissue>Brain cortex</tissue>
        <tissue>Kidney</tissue>
    </source>
</reference>
<accession>Q5RAH8</accession>
<accession>Q5RFM6</accession>
<evidence type="ECO:0000250" key="1">
    <source>
        <dbReference type="UniProtKB" id="Q9D8M4"/>
    </source>
</evidence>
<evidence type="ECO:0000305" key="2"/>
<name>RL7L_PONAB</name>
<gene>
    <name type="primary">RPL7L1</name>
</gene>
<feature type="chain" id="PRO_0000104660" description="Large ribosomal subunit protein uL30-like 1">
    <location>
        <begin position="1"/>
        <end position="246"/>
    </location>
</feature>
<feature type="modified residue" description="Phosphoserine" evidence="1">
    <location>
        <position position="54"/>
    </location>
</feature>
<feature type="sequence conflict" description="In Ref. 1; CAH89431." evidence="2" ref="1">
    <original>E</original>
    <variation>K</variation>
    <location>
        <position position="32"/>
    </location>
</feature>
<feature type="sequence conflict" description="In Ref. 1; CAH89431." evidence="2" ref="1">
    <original>M</original>
    <variation>L</variation>
    <location>
        <position position="66"/>
    </location>
</feature>
<feature type="sequence conflict" description="In Ref. 1; CAH89431." evidence="2" ref="1">
    <original>K</original>
    <variation>E</variation>
    <location>
        <position position="129"/>
    </location>
</feature>
<feature type="sequence conflict" description="In Ref. 1; CAH89431." evidence="2" ref="1">
    <original>N</original>
    <variation>S</variation>
    <location>
        <position position="144"/>
    </location>
</feature>
<protein>
    <recommendedName>
        <fullName evidence="2">Large ribosomal subunit protein uL30-like 1</fullName>
    </recommendedName>
    <alternativeName>
        <fullName>60S ribosomal protein L7-like 1</fullName>
    </alternativeName>
</protein>
<dbReference type="EMBL" id="CR857129">
    <property type="protein sequence ID" value="CAH89431.1"/>
    <property type="molecule type" value="mRNA"/>
</dbReference>
<dbReference type="EMBL" id="CR859037">
    <property type="protein sequence ID" value="CAH91232.1"/>
    <property type="molecule type" value="mRNA"/>
</dbReference>
<dbReference type="RefSeq" id="NP_001124607.1">
    <property type="nucleotide sequence ID" value="NM_001131135.1"/>
</dbReference>
<dbReference type="SMR" id="Q5RAH8"/>
<dbReference type="FunCoup" id="Q5RAH8">
    <property type="interactions" value="676"/>
</dbReference>
<dbReference type="STRING" id="9601.ENSPPYP00000018588"/>
<dbReference type="GeneID" id="100171444"/>
<dbReference type="KEGG" id="pon:100171444"/>
<dbReference type="CTD" id="285855"/>
<dbReference type="eggNOG" id="KOG3184">
    <property type="taxonomic scope" value="Eukaryota"/>
</dbReference>
<dbReference type="InParanoid" id="Q5RAH8"/>
<dbReference type="OrthoDB" id="9525320at2759"/>
<dbReference type="Proteomes" id="UP000001595">
    <property type="component" value="Unplaced"/>
</dbReference>
<dbReference type="GO" id="GO:0022625">
    <property type="term" value="C:cytosolic large ribosomal subunit"/>
    <property type="evidence" value="ECO:0007669"/>
    <property type="project" value="TreeGrafter"/>
</dbReference>
<dbReference type="GO" id="GO:0003723">
    <property type="term" value="F:RNA binding"/>
    <property type="evidence" value="ECO:0007669"/>
    <property type="project" value="InterPro"/>
</dbReference>
<dbReference type="GO" id="GO:0003735">
    <property type="term" value="F:structural constituent of ribosome"/>
    <property type="evidence" value="ECO:0007669"/>
    <property type="project" value="InterPro"/>
</dbReference>
<dbReference type="GO" id="GO:0000463">
    <property type="term" value="P:maturation of LSU-rRNA from tricistronic rRNA transcript (SSU-rRNA, 5.8S rRNA, LSU-rRNA)"/>
    <property type="evidence" value="ECO:0007669"/>
    <property type="project" value="InterPro"/>
</dbReference>
<dbReference type="CDD" id="cd01657">
    <property type="entry name" value="Ribosomal_L7_archeal_euk"/>
    <property type="match status" value="1"/>
</dbReference>
<dbReference type="Gene3D" id="3.30.1390.20">
    <property type="entry name" value="Ribosomal protein L30, ferredoxin-like fold domain"/>
    <property type="match status" value="1"/>
</dbReference>
<dbReference type="InterPro" id="IPR036919">
    <property type="entry name" value="Ribo_uL30_ferredoxin-like_sf"/>
</dbReference>
<dbReference type="InterPro" id="IPR039699">
    <property type="entry name" value="Ribosomal_uL30"/>
</dbReference>
<dbReference type="InterPro" id="IPR018038">
    <property type="entry name" value="Ribosomal_uL30_CS"/>
</dbReference>
<dbReference type="InterPro" id="IPR005998">
    <property type="entry name" value="Ribosomal_uL30_euk"/>
</dbReference>
<dbReference type="InterPro" id="IPR035808">
    <property type="entry name" value="Ribosomal_uL30_euk_arc"/>
</dbReference>
<dbReference type="InterPro" id="IPR016082">
    <property type="entry name" value="Ribosomal_uL30_ferredoxin-like"/>
</dbReference>
<dbReference type="InterPro" id="IPR012988">
    <property type="entry name" value="Ribosomal_uL30_N_euk"/>
</dbReference>
<dbReference type="NCBIfam" id="TIGR01310">
    <property type="entry name" value="uL30_euk"/>
    <property type="match status" value="1"/>
</dbReference>
<dbReference type="PANTHER" id="PTHR11524">
    <property type="entry name" value="60S RIBOSOMAL PROTEIN L7"/>
    <property type="match status" value="1"/>
</dbReference>
<dbReference type="PANTHER" id="PTHR11524:SF13">
    <property type="entry name" value="RIBOSOMAL PROTEIN UL30-LIKE"/>
    <property type="match status" value="1"/>
</dbReference>
<dbReference type="Pfam" id="PF00327">
    <property type="entry name" value="Ribosomal_L30"/>
    <property type="match status" value="1"/>
</dbReference>
<dbReference type="Pfam" id="PF08079">
    <property type="entry name" value="Ribosomal_L30_N"/>
    <property type="match status" value="1"/>
</dbReference>
<dbReference type="SUPFAM" id="SSF55129">
    <property type="entry name" value="Ribosomal protein L30p/L7e"/>
    <property type="match status" value="1"/>
</dbReference>
<dbReference type="PROSITE" id="PS00634">
    <property type="entry name" value="RIBOSOMAL_L30"/>
    <property type="match status" value="1"/>
</dbReference>
<comment type="similarity">
    <text evidence="2">Belongs to the universal ribosomal protein uL30 family.</text>
</comment>
<sequence>MAEQEQRKIPLVPENLLKKRKAYQALKATQAEQALLAKKEQRKGKGLRFKRLESFLHDSWRQKRDMVRLRRLEMKPHALELPDKHSLAFVVRIERIDGVSLLVQRTIARLRLKKIFSGVFVKVTPQNLKMLRIVEPYVTWGFPNLKSVRELILKRGQAKVKNKTIPLTDNTVIEEHLGKFGVICLEDLIHEIAFPGKHFQEISWFLRPFHLSVARHATKNRVGFLKEMGTPGYRGERINQLIRQLN</sequence>
<proteinExistence type="evidence at transcript level"/>
<organism>
    <name type="scientific">Pongo abelii</name>
    <name type="common">Sumatran orangutan</name>
    <name type="synonym">Pongo pygmaeus abelii</name>
    <dbReference type="NCBI Taxonomy" id="9601"/>
    <lineage>
        <taxon>Eukaryota</taxon>
        <taxon>Metazoa</taxon>
        <taxon>Chordata</taxon>
        <taxon>Craniata</taxon>
        <taxon>Vertebrata</taxon>
        <taxon>Euteleostomi</taxon>
        <taxon>Mammalia</taxon>
        <taxon>Eutheria</taxon>
        <taxon>Euarchontoglires</taxon>
        <taxon>Primates</taxon>
        <taxon>Haplorrhini</taxon>
        <taxon>Catarrhini</taxon>
        <taxon>Hominidae</taxon>
        <taxon>Pongo</taxon>
    </lineage>
</organism>